<organism>
    <name type="scientific">Haemophilus influenzae (strain PittEE)</name>
    <dbReference type="NCBI Taxonomy" id="374930"/>
    <lineage>
        <taxon>Bacteria</taxon>
        <taxon>Pseudomonadati</taxon>
        <taxon>Pseudomonadota</taxon>
        <taxon>Gammaproteobacteria</taxon>
        <taxon>Pasteurellales</taxon>
        <taxon>Pasteurellaceae</taxon>
        <taxon>Haemophilus</taxon>
    </lineage>
</organism>
<comment type="function">
    <text evidence="1">Catalyzes the NADPH-dependent rearrangement and reduction of 1-deoxy-D-xylulose-5-phosphate (DXP) to 2-C-methyl-D-erythritol 4-phosphate (MEP).</text>
</comment>
<comment type="catalytic activity">
    <reaction evidence="1">
        <text>2-C-methyl-D-erythritol 4-phosphate + NADP(+) = 1-deoxy-D-xylulose 5-phosphate + NADPH + H(+)</text>
        <dbReference type="Rhea" id="RHEA:13717"/>
        <dbReference type="ChEBI" id="CHEBI:15378"/>
        <dbReference type="ChEBI" id="CHEBI:57783"/>
        <dbReference type="ChEBI" id="CHEBI:57792"/>
        <dbReference type="ChEBI" id="CHEBI:58262"/>
        <dbReference type="ChEBI" id="CHEBI:58349"/>
        <dbReference type="EC" id="1.1.1.267"/>
    </reaction>
    <physiologicalReaction direction="right-to-left" evidence="1">
        <dbReference type="Rhea" id="RHEA:13719"/>
    </physiologicalReaction>
</comment>
<comment type="cofactor">
    <cofactor evidence="1">
        <name>Mg(2+)</name>
        <dbReference type="ChEBI" id="CHEBI:18420"/>
    </cofactor>
    <cofactor evidence="1">
        <name>Mn(2+)</name>
        <dbReference type="ChEBI" id="CHEBI:29035"/>
    </cofactor>
</comment>
<comment type="pathway">
    <text evidence="1">Isoprenoid biosynthesis; isopentenyl diphosphate biosynthesis via DXP pathway; isopentenyl diphosphate from 1-deoxy-D-xylulose 5-phosphate: step 1/6.</text>
</comment>
<comment type="similarity">
    <text evidence="1">Belongs to the DXR family.</text>
</comment>
<protein>
    <recommendedName>
        <fullName evidence="1">1-deoxy-D-xylulose 5-phosphate reductoisomerase</fullName>
        <shortName evidence="1">DXP reductoisomerase</shortName>
        <ecNumber evidence="1">1.1.1.267</ecNumber>
    </recommendedName>
    <alternativeName>
        <fullName evidence="1">1-deoxyxylulose-5-phosphate reductoisomerase</fullName>
    </alternativeName>
    <alternativeName>
        <fullName evidence="1">2-C-methyl-D-erythritol 4-phosphate synthase</fullName>
    </alternativeName>
</protein>
<dbReference type="EC" id="1.1.1.267" evidence="1"/>
<dbReference type="EMBL" id="CP000671">
    <property type="protein sequence ID" value="ABQ98918.1"/>
    <property type="molecule type" value="Genomic_DNA"/>
</dbReference>
<dbReference type="SMR" id="A5UDR7"/>
<dbReference type="KEGG" id="hip:CGSHiEE_08025"/>
<dbReference type="HOGENOM" id="CLU_035714_4_0_6"/>
<dbReference type="UniPathway" id="UPA00056">
    <property type="reaction ID" value="UER00092"/>
</dbReference>
<dbReference type="GO" id="GO:0030604">
    <property type="term" value="F:1-deoxy-D-xylulose-5-phosphate reductoisomerase activity"/>
    <property type="evidence" value="ECO:0007669"/>
    <property type="project" value="UniProtKB-UniRule"/>
</dbReference>
<dbReference type="GO" id="GO:0030145">
    <property type="term" value="F:manganese ion binding"/>
    <property type="evidence" value="ECO:0007669"/>
    <property type="project" value="TreeGrafter"/>
</dbReference>
<dbReference type="GO" id="GO:0070402">
    <property type="term" value="F:NADPH binding"/>
    <property type="evidence" value="ECO:0007669"/>
    <property type="project" value="InterPro"/>
</dbReference>
<dbReference type="GO" id="GO:0051484">
    <property type="term" value="P:isopentenyl diphosphate biosynthetic process, methylerythritol 4-phosphate pathway involved in terpenoid biosynthetic process"/>
    <property type="evidence" value="ECO:0007669"/>
    <property type="project" value="TreeGrafter"/>
</dbReference>
<dbReference type="FunFam" id="1.10.1740.10:FF:000004">
    <property type="entry name" value="1-deoxy-D-xylulose 5-phosphate reductoisomerase"/>
    <property type="match status" value="1"/>
</dbReference>
<dbReference type="FunFam" id="3.40.50.720:FF:000045">
    <property type="entry name" value="1-deoxy-D-xylulose 5-phosphate reductoisomerase"/>
    <property type="match status" value="1"/>
</dbReference>
<dbReference type="Gene3D" id="1.10.1740.10">
    <property type="match status" value="1"/>
</dbReference>
<dbReference type="Gene3D" id="3.40.50.720">
    <property type="entry name" value="NAD(P)-binding Rossmann-like Domain"/>
    <property type="match status" value="1"/>
</dbReference>
<dbReference type="HAMAP" id="MF_00183">
    <property type="entry name" value="DXP_reductoisom"/>
    <property type="match status" value="1"/>
</dbReference>
<dbReference type="InterPro" id="IPR003821">
    <property type="entry name" value="DXP_reductoisomerase"/>
</dbReference>
<dbReference type="InterPro" id="IPR013644">
    <property type="entry name" value="DXP_reductoisomerase_C"/>
</dbReference>
<dbReference type="InterPro" id="IPR013512">
    <property type="entry name" value="DXP_reductoisomerase_N"/>
</dbReference>
<dbReference type="InterPro" id="IPR026877">
    <property type="entry name" value="DXPR_C"/>
</dbReference>
<dbReference type="InterPro" id="IPR036169">
    <property type="entry name" value="DXPR_C_sf"/>
</dbReference>
<dbReference type="InterPro" id="IPR036291">
    <property type="entry name" value="NAD(P)-bd_dom_sf"/>
</dbReference>
<dbReference type="NCBIfam" id="TIGR00243">
    <property type="entry name" value="Dxr"/>
    <property type="match status" value="1"/>
</dbReference>
<dbReference type="NCBIfam" id="NF003938">
    <property type="entry name" value="PRK05447.1-1"/>
    <property type="match status" value="1"/>
</dbReference>
<dbReference type="NCBIfam" id="NF009114">
    <property type="entry name" value="PRK12464.1"/>
    <property type="match status" value="1"/>
</dbReference>
<dbReference type="PANTHER" id="PTHR30525">
    <property type="entry name" value="1-DEOXY-D-XYLULOSE 5-PHOSPHATE REDUCTOISOMERASE"/>
    <property type="match status" value="1"/>
</dbReference>
<dbReference type="PANTHER" id="PTHR30525:SF0">
    <property type="entry name" value="1-DEOXY-D-XYLULOSE 5-PHOSPHATE REDUCTOISOMERASE, CHLOROPLASTIC"/>
    <property type="match status" value="1"/>
</dbReference>
<dbReference type="Pfam" id="PF08436">
    <property type="entry name" value="DXP_redisom_C"/>
    <property type="match status" value="1"/>
</dbReference>
<dbReference type="Pfam" id="PF02670">
    <property type="entry name" value="DXP_reductoisom"/>
    <property type="match status" value="1"/>
</dbReference>
<dbReference type="Pfam" id="PF13288">
    <property type="entry name" value="DXPR_C"/>
    <property type="match status" value="1"/>
</dbReference>
<dbReference type="PIRSF" id="PIRSF006205">
    <property type="entry name" value="Dxp_reductismrs"/>
    <property type="match status" value="1"/>
</dbReference>
<dbReference type="SUPFAM" id="SSF69055">
    <property type="entry name" value="1-deoxy-D-xylulose-5-phosphate reductoisomerase, C-terminal domain"/>
    <property type="match status" value="1"/>
</dbReference>
<dbReference type="SUPFAM" id="SSF55347">
    <property type="entry name" value="Glyceraldehyde-3-phosphate dehydrogenase-like, C-terminal domain"/>
    <property type="match status" value="1"/>
</dbReference>
<dbReference type="SUPFAM" id="SSF51735">
    <property type="entry name" value="NAD(P)-binding Rossmann-fold domains"/>
    <property type="match status" value="1"/>
</dbReference>
<keyword id="KW-0414">Isoprene biosynthesis</keyword>
<keyword id="KW-0464">Manganese</keyword>
<keyword id="KW-0479">Metal-binding</keyword>
<keyword id="KW-0521">NADP</keyword>
<keyword id="KW-0560">Oxidoreductase</keyword>
<reference key="1">
    <citation type="journal article" date="2007" name="Genome Biol.">
        <title>Characterization and modeling of the Haemophilus influenzae core and supragenomes based on the complete genomic sequences of Rd and 12 clinical nontypeable strains.</title>
        <authorList>
            <person name="Hogg J.S."/>
            <person name="Hu F.Z."/>
            <person name="Janto B."/>
            <person name="Boissy R."/>
            <person name="Hayes J."/>
            <person name="Keefe R."/>
            <person name="Post J.C."/>
            <person name="Ehrlich G.D."/>
        </authorList>
    </citation>
    <scope>NUCLEOTIDE SEQUENCE [LARGE SCALE GENOMIC DNA]</scope>
    <source>
        <strain>PittEE</strain>
    </source>
</reference>
<evidence type="ECO:0000255" key="1">
    <source>
        <dbReference type="HAMAP-Rule" id="MF_00183"/>
    </source>
</evidence>
<feature type="chain" id="PRO_1000020267" description="1-deoxy-D-xylulose 5-phosphate reductoisomerase">
    <location>
        <begin position="1"/>
        <end position="397"/>
    </location>
</feature>
<feature type="binding site" evidence="1">
    <location>
        <position position="12"/>
    </location>
    <ligand>
        <name>NADPH</name>
        <dbReference type="ChEBI" id="CHEBI:57783"/>
    </ligand>
</feature>
<feature type="binding site" evidence="1">
    <location>
        <position position="13"/>
    </location>
    <ligand>
        <name>NADPH</name>
        <dbReference type="ChEBI" id="CHEBI:57783"/>
    </ligand>
</feature>
<feature type="binding site" evidence="1">
    <location>
        <position position="14"/>
    </location>
    <ligand>
        <name>NADPH</name>
        <dbReference type="ChEBI" id="CHEBI:57783"/>
    </ligand>
</feature>
<feature type="binding site" evidence="1">
    <location>
        <position position="15"/>
    </location>
    <ligand>
        <name>NADPH</name>
        <dbReference type="ChEBI" id="CHEBI:57783"/>
    </ligand>
</feature>
<feature type="binding site" evidence="1">
    <location>
        <position position="38"/>
    </location>
    <ligand>
        <name>NADPH</name>
        <dbReference type="ChEBI" id="CHEBI:57783"/>
    </ligand>
</feature>
<feature type="binding site" evidence="1">
    <location>
        <position position="39"/>
    </location>
    <ligand>
        <name>NADPH</name>
        <dbReference type="ChEBI" id="CHEBI:57783"/>
    </ligand>
</feature>
<feature type="binding site" evidence="1">
    <location>
        <position position="40"/>
    </location>
    <ligand>
        <name>NADPH</name>
        <dbReference type="ChEBI" id="CHEBI:57783"/>
    </ligand>
</feature>
<feature type="binding site" evidence="1">
    <location>
        <position position="126"/>
    </location>
    <ligand>
        <name>NADPH</name>
        <dbReference type="ChEBI" id="CHEBI:57783"/>
    </ligand>
</feature>
<feature type="binding site" evidence="1">
    <location>
        <position position="127"/>
    </location>
    <ligand>
        <name>1-deoxy-D-xylulose 5-phosphate</name>
        <dbReference type="ChEBI" id="CHEBI:57792"/>
    </ligand>
</feature>
<feature type="binding site" evidence="1">
    <location>
        <position position="128"/>
    </location>
    <ligand>
        <name>NADPH</name>
        <dbReference type="ChEBI" id="CHEBI:57783"/>
    </ligand>
</feature>
<feature type="binding site" evidence="1">
    <location>
        <position position="152"/>
    </location>
    <ligand>
        <name>Mn(2+)</name>
        <dbReference type="ChEBI" id="CHEBI:29035"/>
    </ligand>
</feature>
<feature type="binding site" evidence="1">
    <location>
        <position position="153"/>
    </location>
    <ligand>
        <name>1-deoxy-D-xylulose 5-phosphate</name>
        <dbReference type="ChEBI" id="CHEBI:57792"/>
    </ligand>
</feature>
<feature type="binding site" evidence="1">
    <location>
        <position position="154"/>
    </location>
    <ligand>
        <name>1-deoxy-D-xylulose 5-phosphate</name>
        <dbReference type="ChEBI" id="CHEBI:57792"/>
    </ligand>
</feature>
<feature type="binding site" evidence="1">
    <location>
        <position position="154"/>
    </location>
    <ligand>
        <name>Mn(2+)</name>
        <dbReference type="ChEBI" id="CHEBI:29035"/>
    </ligand>
</feature>
<feature type="binding site" evidence="1">
    <location>
        <position position="188"/>
    </location>
    <ligand>
        <name>1-deoxy-D-xylulose 5-phosphate</name>
        <dbReference type="ChEBI" id="CHEBI:57792"/>
    </ligand>
</feature>
<feature type="binding site" evidence="1">
    <location>
        <position position="211"/>
    </location>
    <ligand>
        <name>1-deoxy-D-xylulose 5-phosphate</name>
        <dbReference type="ChEBI" id="CHEBI:57792"/>
    </ligand>
</feature>
<feature type="binding site" evidence="1">
    <location>
        <position position="217"/>
    </location>
    <ligand>
        <name>NADPH</name>
        <dbReference type="ChEBI" id="CHEBI:57783"/>
    </ligand>
</feature>
<feature type="binding site" evidence="1">
    <location>
        <position position="224"/>
    </location>
    <ligand>
        <name>1-deoxy-D-xylulose 5-phosphate</name>
        <dbReference type="ChEBI" id="CHEBI:57792"/>
    </ligand>
</feature>
<feature type="binding site" evidence="1">
    <location>
        <position position="229"/>
    </location>
    <ligand>
        <name>1-deoxy-D-xylulose 5-phosphate</name>
        <dbReference type="ChEBI" id="CHEBI:57792"/>
    </ligand>
</feature>
<feature type="binding site" evidence="1">
    <location>
        <position position="230"/>
    </location>
    <ligand>
        <name>1-deoxy-D-xylulose 5-phosphate</name>
        <dbReference type="ChEBI" id="CHEBI:57792"/>
    </ligand>
</feature>
<feature type="binding site" evidence="1">
    <location>
        <position position="233"/>
    </location>
    <ligand>
        <name>1-deoxy-D-xylulose 5-phosphate</name>
        <dbReference type="ChEBI" id="CHEBI:57792"/>
    </ligand>
</feature>
<feature type="binding site" evidence="1">
    <location>
        <position position="233"/>
    </location>
    <ligand>
        <name>Mn(2+)</name>
        <dbReference type="ChEBI" id="CHEBI:29035"/>
    </ligand>
</feature>
<gene>
    <name evidence="1" type="primary">dxr</name>
    <name type="ordered locus">CGSHiEE_08025</name>
</gene>
<accession>A5UDR7</accession>
<proteinExistence type="inferred from homology"/>
<name>DXR_HAEIE</name>
<sequence>MQKQNIVILGSTGSIGKSTLSVIENNPEKYHAFALVGGKNVETMFEQCIKFRPHFAALDDVNAAKILREKLIAHHIPTEVLAGQRAICELAAHPDADQIMASIVGAAGLLPTLSAVKAGKRVLLANKESLVTCGQLFIDAVKNYSAKLLPVDSEHNAIFQSLPPEAQEKIGFCPLSELGVSKIILTGSGGPFRYTPLEQFTNITPEQAVAHPNWSMGKKISVDSATMMNKGLEYIEARWLFNASAEEMEVIIHPQSIIHSMVRYVDGSVIAQMGNPDMRTPIAETMAYPHRTFAGVEPLDFFKIKELTFIEPDFNRYPNLKLAIDAFAAGQYATTAMNTANEIAVQAFLDRQISFMDIAKINLKTIEKISPYTIQNIDDVLEIDAQAREIAKTLIRE</sequence>